<proteinExistence type="predicted"/>
<feature type="chain" id="PRO_0000107173" description="Uncharacterized protein MJ1114">
    <location>
        <begin position="1"/>
        <end position="192"/>
    </location>
</feature>
<reference key="1">
    <citation type="journal article" date="1996" name="Science">
        <title>Complete genome sequence of the methanogenic archaeon, Methanococcus jannaschii.</title>
        <authorList>
            <person name="Bult C.J."/>
            <person name="White O."/>
            <person name="Olsen G.J."/>
            <person name="Zhou L."/>
            <person name="Fleischmann R.D."/>
            <person name="Sutton G.G."/>
            <person name="Blake J.A."/>
            <person name="FitzGerald L.M."/>
            <person name="Clayton R.A."/>
            <person name="Gocayne J.D."/>
            <person name="Kerlavage A.R."/>
            <person name="Dougherty B.A."/>
            <person name="Tomb J.-F."/>
            <person name="Adams M.D."/>
            <person name="Reich C.I."/>
            <person name="Overbeek R."/>
            <person name="Kirkness E.F."/>
            <person name="Weinstock K.G."/>
            <person name="Merrick J.M."/>
            <person name="Glodek A."/>
            <person name="Scott J.L."/>
            <person name="Geoghagen N.S.M."/>
            <person name="Weidman J.F."/>
            <person name="Fuhrmann J.L."/>
            <person name="Nguyen D."/>
            <person name="Utterback T.R."/>
            <person name="Kelley J.M."/>
            <person name="Peterson J.D."/>
            <person name="Sadow P.W."/>
            <person name="Hanna M.C."/>
            <person name="Cotton M.D."/>
            <person name="Roberts K.M."/>
            <person name="Hurst M.A."/>
            <person name="Kaine B.P."/>
            <person name="Borodovsky M."/>
            <person name="Klenk H.-P."/>
            <person name="Fraser C.M."/>
            <person name="Smith H.O."/>
            <person name="Woese C.R."/>
            <person name="Venter J.C."/>
        </authorList>
    </citation>
    <scope>NUCLEOTIDE SEQUENCE [LARGE SCALE GENOMIC DNA]</scope>
    <source>
        <strain>ATCC 43067 / DSM 2661 / JAL-1 / JCM 10045 / NBRC 100440</strain>
    </source>
</reference>
<gene>
    <name type="ordered locus">MJ1114</name>
</gene>
<sequence>MDIVEKVYKEGILKLKENIPQIIINLVVAGLIWVFGILVFIPIADMLGNPYLFGLTALKPIISAIITIALIIVLLRVTKDFGELMDGIADIIAVKLAGSRVNEEKLKKYRRGLRGLAYLIVAIIAYLFFLPVISGITPVLAGIVLIILVLWAVTVLINIGHIFSEEIEEGIRIATEKLEKALEKSVKNEENE</sequence>
<protein>
    <recommendedName>
        <fullName>Uncharacterized protein MJ1114</fullName>
    </recommendedName>
</protein>
<accession>Q58514</accession>
<name>Y1114_METJA</name>
<organism>
    <name type="scientific">Methanocaldococcus jannaschii (strain ATCC 43067 / DSM 2661 / JAL-1 / JCM 10045 / NBRC 100440)</name>
    <name type="common">Methanococcus jannaschii</name>
    <dbReference type="NCBI Taxonomy" id="243232"/>
    <lineage>
        <taxon>Archaea</taxon>
        <taxon>Methanobacteriati</taxon>
        <taxon>Methanobacteriota</taxon>
        <taxon>Methanomada group</taxon>
        <taxon>Methanococci</taxon>
        <taxon>Methanococcales</taxon>
        <taxon>Methanocaldococcaceae</taxon>
        <taxon>Methanocaldococcus</taxon>
    </lineage>
</organism>
<keyword id="KW-1185">Reference proteome</keyword>
<dbReference type="EMBL" id="L77117">
    <property type="protein sequence ID" value="AAB99122.1"/>
    <property type="molecule type" value="Genomic_DNA"/>
</dbReference>
<dbReference type="PIR" id="A64439">
    <property type="entry name" value="A64439"/>
</dbReference>
<dbReference type="RefSeq" id="WP_010870625.1">
    <property type="nucleotide sequence ID" value="NC_000909.1"/>
</dbReference>
<dbReference type="SMR" id="Q58514"/>
<dbReference type="STRING" id="243232.MJ_1114"/>
<dbReference type="PaxDb" id="243232-MJ_1114"/>
<dbReference type="EnsemblBacteria" id="AAB99122">
    <property type="protein sequence ID" value="AAB99122"/>
    <property type="gene ID" value="MJ_1114"/>
</dbReference>
<dbReference type="GeneID" id="1452010"/>
<dbReference type="KEGG" id="mja:MJ_1114"/>
<dbReference type="eggNOG" id="arCOG05068">
    <property type="taxonomic scope" value="Archaea"/>
</dbReference>
<dbReference type="HOGENOM" id="CLU_1431662_0_0_2"/>
<dbReference type="InParanoid" id="Q58514"/>
<dbReference type="OrthoDB" id="112370at2157"/>
<dbReference type="Proteomes" id="UP000000805">
    <property type="component" value="Chromosome"/>
</dbReference>